<organism>
    <name type="scientific">Burkholderia pseudomallei (strain 1710b)</name>
    <dbReference type="NCBI Taxonomy" id="320372"/>
    <lineage>
        <taxon>Bacteria</taxon>
        <taxon>Pseudomonadati</taxon>
        <taxon>Pseudomonadota</taxon>
        <taxon>Betaproteobacteria</taxon>
        <taxon>Burkholderiales</taxon>
        <taxon>Burkholderiaceae</taxon>
        <taxon>Burkholderia</taxon>
        <taxon>pseudomallei group</taxon>
    </lineage>
</organism>
<name>IF11_BURP1</name>
<comment type="function">
    <text evidence="1">One of the essential components for the initiation of protein synthesis. Stabilizes the binding of IF-2 and IF-3 on the 30S subunit to which N-formylmethionyl-tRNA(fMet) subsequently binds. Helps modulate mRNA selection, yielding the 30S pre-initiation complex (PIC). Upon addition of the 50S ribosomal subunit IF-1, IF-2 and IF-3 are released leaving the mature 70S translation initiation complex.</text>
</comment>
<comment type="subunit">
    <text evidence="1">Component of the 30S ribosomal translation pre-initiation complex which assembles on the 30S ribosome in the order IF-2 and IF-3, IF-1 and N-formylmethionyl-tRNA(fMet); mRNA recruitment can occur at any time during PIC assembly.</text>
</comment>
<comment type="subcellular location">
    <subcellularLocation>
        <location evidence="1">Cytoplasm</location>
    </subcellularLocation>
</comment>
<comment type="similarity">
    <text evidence="1">Belongs to the IF-1 family.</text>
</comment>
<evidence type="ECO:0000255" key="1">
    <source>
        <dbReference type="HAMAP-Rule" id="MF_00075"/>
    </source>
</evidence>
<feature type="chain" id="PRO_0000263773" description="Translation initiation factor IF-1 1">
    <location>
        <begin position="1"/>
        <end position="88"/>
    </location>
</feature>
<feature type="domain" description="S1-like" evidence="1">
    <location>
        <begin position="1"/>
        <end position="72"/>
    </location>
</feature>
<proteinExistence type="inferred from homology"/>
<reference key="1">
    <citation type="journal article" date="2010" name="Genome Biol. Evol.">
        <title>Continuing evolution of Burkholderia mallei through genome reduction and large-scale rearrangements.</title>
        <authorList>
            <person name="Losada L."/>
            <person name="Ronning C.M."/>
            <person name="DeShazer D."/>
            <person name="Woods D."/>
            <person name="Fedorova N."/>
            <person name="Kim H.S."/>
            <person name="Shabalina S.A."/>
            <person name="Pearson T.R."/>
            <person name="Brinkac L."/>
            <person name="Tan P."/>
            <person name="Nandi T."/>
            <person name="Crabtree J."/>
            <person name="Badger J."/>
            <person name="Beckstrom-Sternberg S."/>
            <person name="Saqib M."/>
            <person name="Schutzer S.E."/>
            <person name="Keim P."/>
            <person name="Nierman W.C."/>
        </authorList>
    </citation>
    <scope>NUCLEOTIDE SEQUENCE [LARGE SCALE GENOMIC DNA]</scope>
    <source>
        <strain>1710b</strain>
    </source>
</reference>
<sequence length="88" mass="10078">MAKEELIELDGIVDEVLPDSRYRVTLDNGVVVGAYASGQMRRHRIRILAGDRVTLELSVYDLTKGRINFRHKDERRSDAAPRASARRR</sequence>
<keyword id="KW-0963">Cytoplasm</keyword>
<keyword id="KW-0396">Initiation factor</keyword>
<keyword id="KW-0648">Protein biosynthesis</keyword>
<keyword id="KW-0694">RNA-binding</keyword>
<keyword id="KW-0699">rRNA-binding</keyword>
<gene>
    <name evidence="1" type="primary">infA1</name>
    <name type="ordered locus">BURPS1710b_1295</name>
</gene>
<dbReference type="EMBL" id="CP000124">
    <property type="protein sequence ID" value="ABA49061.1"/>
    <property type="molecule type" value="Genomic_DNA"/>
</dbReference>
<dbReference type="SMR" id="Q3JUP8"/>
<dbReference type="EnsemblBacteria" id="ABA49061">
    <property type="protein sequence ID" value="ABA49061"/>
    <property type="gene ID" value="BURPS1710b_1295"/>
</dbReference>
<dbReference type="KEGG" id="bpm:BURPS1710b_1295"/>
<dbReference type="HOGENOM" id="CLU_151267_4_1_4"/>
<dbReference type="Proteomes" id="UP000002700">
    <property type="component" value="Chromosome I"/>
</dbReference>
<dbReference type="GO" id="GO:0005829">
    <property type="term" value="C:cytosol"/>
    <property type="evidence" value="ECO:0007669"/>
    <property type="project" value="TreeGrafter"/>
</dbReference>
<dbReference type="GO" id="GO:0043022">
    <property type="term" value="F:ribosome binding"/>
    <property type="evidence" value="ECO:0007669"/>
    <property type="project" value="UniProtKB-UniRule"/>
</dbReference>
<dbReference type="GO" id="GO:0019843">
    <property type="term" value="F:rRNA binding"/>
    <property type="evidence" value="ECO:0007669"/>
    <property type="project" value="UniProtKB-UniRule"/>
</dbReference>
<dbReference type="GO" id="GO:0003743">
    <property type="term" value="F:translation initiation factor activity"/>
    <property type="evidence" value="ECO:0007669"/>
    <property type="project" value="UniProtKB-UniRule"/>
</dbReference>
<dbReference type="CDD" id="cd04451">
    <property type="entry name" value="S1_IF1"/>
    <property type="match status" value="1"/>
</dbReference>
<dbReference type="FunFam" id="2.40.50.140:FF:000002">
    <property type="entry name" value="Translation initiation factor IF-1"/>
    <property type="match status" value="1"/>
</dbReference>
<dbReference type="Gene3D" id="2.40.50.140">
    <property type="entry name" value="Nucleic acid-binding proteins"/>
    <property type="match status" value="1"/>
</dbReference>
<dbReference type="HAMAP" id="MF_00075">
    <property type="entry name" value="IF_1"/>
    <property type="match status" value="1"/>
</dbReference>
<dbReference type="InterPro" id="IPR012340">
    <property type="entry name" value="NA-bd_OB-fold"/>
</dbReference>
<dbReference type="InterPro" id="IPR006196">
    <property type="entry name" value="RNA-binding_domain_S1_IF1"/>
</dbReference>
<dbReference type="InterPro" id="IPR003029">
    <property type="entry name" value="S1_domain"/>
</dbReference>
<dbReference type="InterPro" id="IPR004368">
    <property type="entry name" value="TIF_IF1"/>
</dbReference>
<dbReference type="NCBIfam" id="TIGR00008">
    <property type="entry name" value="infA"/>
    <property type="match status" value="1"/>
</dbReference>
<dbReference type="PANTHER" id="PTHR33370">
    <property type="entry name" value="TRANSLATION INITIATION FACTOR IF-1, CHLOROPLASTIC"/>
    <property type="match status" value="1"/>
</dbReference>
<dbReference type="PANTHER" id="PTHR33370:SF1">
    <property type="entry name" value="TRANSLATION INITIATION FACTOR IF-1, CHLOROPLASTIC"/>
    <property type="match status" value="1"/>
</dbReference>
<dbReference type="Pfam" id="PF01176">
    <property type="entry name" value="eIF-1a"/>
    <property type="match status" value="1"/>
</dbReference>
<dbReference type="SMART" id="SM00316">
    <property type="entry name" value="S1"/>
    <property type="match status" value="1"/>
</dbReference>
<dbReference type="SUPFAM" id="SSF50249">
    <property type="entry name" value="Nucleic acid-binding proteins"/>
    <property type="match status" value="1"/>
</dbReference>
<dbReference type="PROSITE" id="PS50832">
    <property type="entry name" value="S1_IF1_TYPE"/>
    <property type="match status" value="1"/>
</dbReference>
<accession>Q3JUP8</accession>
<protein>
    <recommendedName>
        <fullName evidence="1">Translation initiation factor IF-1 1</fullName>
    </recommendedName>
</protein>